<dbReference type="EC" id="1.14.11.-" evidence="1"/>
<dbReference type="EMBL" id="AE014134">
    <property type="protein sequence ID" value="AAF53656.1"/>
    <property type="molecule type" value="Genomic_DNA"/>
</dbReference>
<dbReference type="EMBL" id="AY051684">
    <property type="protein sequence ID" value="AAK93108.1"/>
    <property type="molecule type" value="mRNA"/>
</dbReference>
<dbReference type="RefSeq" id="NP_001286031.1">
    <property type="nucleotide sequence ID" value="NM_001299102.1"/>
</dbReference>
<dbReference type="RefSeq" id="NP_609870.1">
    <property type="nucleotide sequence ID" value="NM_136026.4"/>
</dbReference>
<dbReference type="SMR" id="Q9VJ97"/>
<dbReference type="BioGRID" id="61085">
    <property type="interactions" value="6"/>
</dbReference>
<dbReference type="FunCoup" id="Q9VJ97">
    <property type="interactions" value="2461"/>
</dbReference>
<dbReference type="IntAct" id="Q9VJ97">
    <property type="interactions" value="4"/>
</dbReference>
<dbReference type="STRING" id="7227.FBpp0310373"/>
<dbReference type="PaxDb" id="7227-FBpp0080615"/>
<dbReference type="DNASU" id="35089"/>
<dbReference type="EnsemblMetazoa" id="FBtr0081062">
    <property type="protein sequence ID" value="FBpp0080615"/>
    <property type="gene ID" value="FBgn0032671"/>
</dbReference>
<dbReference type="EnsemblMetazoa" id="FBtr0343823">
    <property type="protein sequence ID" value="FBpp0310373"/>
    <property type="gene ID" value="FBgn0032671"/>
</dbReference>
<dbReference type="GeneID" id="35089"/>
<dbReference type="KEGG" id="dme:Dmel_CG7200"/>
<dbReference type="UCSC" id="CG7200-RA">
    <property type="organism name" value="d. melanogaster"/>
</dbReference>
<dbReference type="AGR" id="FB:FBgn0032671"/>
<dbReference type="CTD" id="65094"/>
<dbReference type="FlyBase" id="FBgn0032671">
    <property type="gene designation" value="JMJD4"/>
</dbReference>
<dbReference type="VEuPathDB" id="VectorBase:FBgn0032671"/>
<dbReference type="eggNOG" id="KOG2131">
    <property type="taxonomic scope" value="Eukaryota"/>
</dbReference>
<dbReference type="HOGENOM" id="CLU_016785_2_2_1"/>
<dbReference type="InParanoid" id="Q9VJ97"/>
<dbReference type="OMA" id="TNIVGHK"/>
<dbReference type="OrthoDB" id="203487at2759"/>
<dbReference type="PhylomeDB" id="Q9VJ97"/>
<dbReference type="Reactome" id="R-DME-9629569">
    <property type="pathway name" value="Protein hydroxylation"/>
</dbReference>
<dbReference type="BioGRID-ORCS" id="35089">
    <property type="hits" value="0 hits in 1 CRISPR screen"/>
</dbReference>
<dbReference type="ChiTaRS" id="CG7200">
    <property type="organism name" value="fly"/>
</dbReference>
<dbReference type="GenomeRNAi" id="35089"/>
<dbReference type="PRO" id="PR:Q9VJ97"/>
<dbReference type="Proteomes" id="UP000000803">
    <property type="component" value="Chromosome 2L"/>
</dbReference>
<dbReference type="Bgee" id="FBgn0032671">
    <property type="expression patterns" value="Expressed in embryonic/larval hemocyte (Drosophila) and 49 other cell types or tissues"/>
</dbReference>
<dbReference type="ExpressionAtlas" id="Q9VJ97">
    <property type="expression patterns" value="baseline and differential"/>
</dbReference>
<dbReference type="GO" id="GO:0005737">
    <property type="term" value="C:cytoplasm"/>
    <property type="evidence" value="ECO:0000314"/>
    <property type="project" value="FlyBase"/>
</dbReference>
<dbReference type="GO" id="GO:0005634">
    <property type="term" value="C:nucleus"/>
    <property type="evidence" value="ECO:0000318"/>
    <property type="project" value="GO_Central"/>
</dbReference>
<dbReference type="GO" id="GO:0016706">
    <property type="term" value="F:2-oxoglutarate-dependent dioxygenase activity"/>
    <property type="evidence" value="ECO:0000250"/>
    <property type="project" value="UniProtKB"/>
</dbReference>
<dbReference type="GO" id="GO:0046872">
    <property type="term" value="F:metal ion binding"/>
    <property type="evidence" value="ECO:0007669"/>
    <property type="project" value="UniProtKB-KW"/>
</dbReference>
<dbReference type="GO" id="GO:0106156">
    <property type="term" value="F:peptidyl-lysine 4-dioxygenase activity"/>
    <property type="evidence" value="ECO:0007669"/>
    <property type="project" value="RHEA"/>
</dbReference>
<dbReference type="GO" id="GO:0043565">
    <property type="term" value="F:sequence-specific DNA binding"/>
    <property type="evidence" value="ECO:0000318"/>
    <property type="project" value="GO_Central"/>
</dbReference>
<dbReference type="GO" id="GO:0045905">
    <property type="term" value="P:positive regulation of translational termination"/>
    <property type="evidence" value="ECO:0000250"/>
    <property type="project" value="UniProtKB"/>
</dbReference>
<dbReference type="GO" id="GO:0018126">
    <property type="term" value="P:protein hydroxylation"/>
    <property type="evidence" value="ECO:0000250"/>
    <property type="project" value="UniProtKB"/>
</dbReference>
<dbReference type="FunFam" id="2.60.120.650:FF:000067">
    <property type="entry name" value="Uncharacterized protein, isoform A"/>
    <property type="match status" value="1"/>
</dbReference>
<dbReference type="Gene3D" id="2.60.120.650">
    <property type="entry name" value="Cupin"/>
    <property type="match status" value="1"/>
</dbReference>
<dbReference type="InterPro" id="IPR003347">
    <property type="entry name" value="JmjC_dom"/>
</dbReference>
<dbReference type="InterPro" id="IPR050910">
    <property type="entry name" value="JMJD6_ArgDemeth/LysHydrox"/>
</dbReference>
<dbReference type="PANTHER" id="PTHR12480:SF6">
    <property type="entry name" value="2-OXOGLUTARATE AND IRON-DEPENDENT OXYGENASE JMJD4"/>
    <property type="match status" value="1"/>
</dbReference>
<dbReference type="PANTHER" id="PTHR12480">
    <property type="entry name" value="ARGININE DEMETHYLASE AND LYSYL-HYDROXYLASE JMJD"/>
    <property type="match status" value="1"/>
</dbReference>
<dbReference type="Pfam" id="PF02373">
    <property type="entry name" value="JmjC"/>
    <property type="match status" value="1"/>
</dbReference>
<dbReference type="SMART" id="SM00558">
    <property type="entry name" value="JmjC"/>
    <property type="match status" value="1"/>
</dbReference>
<dbReference type="SUPFAM" id="SSF51197">
    <property type="entry name" value="Clavaminate synthase-like"/>
    <property type="match status" value="1"/>
</dbReference>
<dbReference type="PROSITE" id="PS51184">
    <property type="entry name" value="JMJC"/>
    <property type="match status" value="1"/>
</dbReference>
<keyword id="KW-0963">Cytoplasm</keyword>
<keyword id="KW-0223">Dioxygenase</keyword>
<keyword id="KW-0408">Iron</keyword>
<keyword id="KW-0479">Metal-binding</keyword>
<keyword id="KW-0539">Nucleus</keyword>
<keyword id="KW-0560">Oxidoreductase</keyword>
<keyword id="KW-1185">Reference proteome</keyword>
<name>JMJD4_DROME</name>
<comment type="function">
    <text evidence="1 3">Catalyzes the 2-oxoglutarate and iron-dependent C4-lysyl hydroxylation of eRF1 thereby promoting the translational termination efficiency of eRF1 (By similarity). May be involved in regulation of chromatin structure, promoting expansion of heterochromatin (PubMed:28701701).</text>
</comment>
<comment type="catalytic activity">
    <reaction evidence="1">
        <text>L-lysyl-[protein] + 2-oxoglutarate + O2 = 4-hydroxy-L-lysyl-[protein] + succinate + CO2</text>
        <dbReference type="Rhea" id="RHEA:57156"/>
        <dbReference type="Rhea" id="RHEA-COMP:9752"/>
        <dbReference type="Rhea" id="RHEA-COMP:15084"/>
        <dbReference type="ChEBI" id="CHEBI:15379"/>
        <dbReference type="ChEBI" id="CHEBI:16526"/>
        <dbReference type="ChEBI" id="CHEBI:16810"/>
        <dbReference type="ChEBI" id="CHEBI:29969"/>
        <dbReference type="ChEBI" id="CHEBI:30031"/>
        <dbReference type="ChEBI" id="CHEBI:141495"/>
    </reaction>
</comment>
<comment type="cofactor">
    <cofactor evidence="1">
        <name>Fe(2+)</name>
        <dbReference type="ChEBI" id="CHEBI:29033"/>
    </cofactor>
</comment>
<comment type="subcellular location">
    <subcellularLocation>
        <location evidence="3">Nucleus</location>
    </subcellularLocation>
    <subcellularLocation>
        <location evidence="3">Cytoplasm</location>
    </subcellularLocation>
</comment>
<comment type="disruption phenotype">
    <text evidence="3 4">Viable (PubMed:28701701). No significant effect on behavior, circadian rhythms or sleep patterns (PubMed:29339751).</text>
</comment>
<comment type="similarity">
    <text evidence="5">Belongs to the JMJD6 family.</text>
</comment>
<sequence length="425" mass="49169">MASEERDGDVLLQLHPEEVVETDPQLPEEIERCSGLDYNDFFWRYMHKNIPVIIANVSNDWECQNWTVGQSSPESRDLNSNPSASSINFDYLKTKISDGPVPVANCNSSYFNSHTKLELNFHDYLAKWRSSIESQSSAAWTSAEVNSNVAPASGDNLYLKDWHLAAQMPGYNFYKVPKYFASDWLNEQLIQQGKDDYRFVYMGPKNSWTSYHADVFGSFSWSTNIVGLKKWLIMPPGEELKLNDRLGNLPFSIDEKMLDEHNVRYYTINQRANEAVFVPSGWFHQVWNLTDTISVNHNWFNGCNISMVWQNLKNNLKAVCNEISDCQQMDNFEAHCQTMLRASFGINYLDFIELLEFIAARRLAEGTVATKFLLFDSYTMNDYHVQYDLECLWKITRTLTEDPTIQCSPLQLEDRCQGLLARLEF</sequence>
<organism evidence="7">
    <name type="scientific">Drosophila melanogaster</name>
    <name type="common">Fruit fly</name>
    <dbReference type="NCBI Taxonomy" id="7227"/>
    <lineage>
        <taxon>Eukaryota</taxon>
        <taxon>Metazoa</taxon>
        <taxon>Ecdysozoa</taxon>
        <taxon>Arthropoda</taxon>
        <taxon>Hexapoda</taxon>
        <taxon>Insecta</taxon>
        <taxon>Pterygota</taxon>
        <taxon>Neoptera</taxon>
        <taxon>Endopterygota</taxon>
        <taxon>Diptera</taxon>
        <taxon>Brachycera</taxon>
        <taxon>Muscomorpha</taxon>
        <taxon>Ephydroidea</taxon>
        <taxon>Drosophilidae</taxon>
        <taxon>Drosophila</taxon>
        <taxon>Sophophora</taxon>
    </lineage>
</organism>
<protein>
    <recommendedName>
        <fullName evidence="1">2-oxoglutarate and iron-dependent oxygenase JMJD4 homolog</fullName>
        <ecNumber evidence="1">1.14.11.-</ecNumber>
    </recommendedName>
    <alternativeName>
        <fullName>JmjC domain-containing protein 4 homolog</fullName>
    </alternativeName>
    <alternativeName>
        <fullName evidence="6">Jumonji domain-containing protein 4</fullName>
    </alternativeName>
    <alternativeName>
        <fullName evidence="1">Lysyl-hydroxylase JMJD4 homolog</fullName>
    </alternativeName>
</protein>
<feature type="chain" id="PRO_0000291963" description="2-oxoglutarate and iron-dependent oxygenase JMJD4 homolog">
    <location>
        <begin position="1"/>
        <end position="425"/>
    </location>
</feature>
<feature type="domain" description="JmjC" evidence="2">
    <location>
        <begin position="165"/>
        <end position="316"/>
    </location>
</feature>
<feature type="binding site" evidence="2">
    <location>
        <position position="212"/>
    </location>
    <ligand>
        <name>Fe cation</name>
        <dbReference type="ChEBI" id="CHEBI:24875"/>
        <note>catalytic</note>
    </ligand>
</feature>
<feature type="binding site" evidence="2">
    <location>
        <position position="214"/>
    </location>
    <ligand>
        <name>Fe cation</name>
        <dbReference type="ChEBI" id="CHEBI:24875"/>
        <note>catalytic</note>
    </ligand>
</feature>
<feature type="binding site" evidence="2">
    <location>
        <position position="284"/>
    </location>
    <ligand>
        <name>Fe cation</name>
        <dbReference type="ChEBI" id="CHEBI:24875"/>
        <note>catalytic</note>
    </ligand>
</feature>
<evidence type="ECO:0000250" key="1">
    <source>
        <dbReference type="UniProtKB" id="Q9H9V9"/>
    </source>
</evidence>
<evidence type="ECO:0000255" key="2">
    <source>
        <dbReference type="PROSITE-ProRule" id="PRU00538"/>
    </source>
</evidence>
<evidence type="ECO:0000269" key="3">
    <source>
    </source>
</evidence>
<evidence type="ECO:0000269" key="4">
    <source>
    </source>
</evidence>
<evidence type="ECO:0000305" key="5"/>
<evidence type="ECO:0000312" key="6">
    <source>
        <dbReference type="FlyBase" id="FBgn0032671"/>
    </source>
</evidence>
<evidence type="ECO:0000312" key="7">
    <source>
        <dbReference type="Proteomes" id="UP000000803"/>
    </source>
</evidence>
<proteinExistence type="evidence at transcript level"/>
<gene>
    <name evidence="6" type="primary">JMJD4</name>
    <name evidence="6" type="ORF">CG7200</name>
</gene>
<reference key="1">
    <citation type="journal article" date="2000" name="Science">
        <title>The genome sequence of Drosophila melanogaster.</title>
        <authorList>
            <person name="Adams M.D."/>
            <person name="Celniker S.E."/>
            <person name="Holt R.A."/>
            <person name="Evans C.A."/>
            <person name="Gocayne J.D."/>
            <person name="Amanatides P.G."/>
            <person name="Scherer S.E."/>
            <person name="Li P.W."/>
            <person name="Hoskins R.A."/>
            <person name="Galle R.F."/>
            <person name="George R.A."/>
            <person name="Lewis S.E."/>
            <person name="Richards S."/>
            <person name="Ashburner M."/>
            <person name="Henderson S.N."/>
            <person name="Sutton G.G."/>
            <person name="Wortman J.R."/>
            <person name="Yandell M.D."/>
            <person name="Zhang Q."/>
            <person name="Chen L.X."/>
            <person name="Brandon R.C."/>
            <person name="Rogers Y.-H.C."/>
            <person name="Blazej R.G."/>
            <person name="Champe M."/>
            <person name="Pfeiffer B.D."/>
            <person name="Wan K.H."/>
            <person name="Doyle C."/>
            <person name="Baxter E.G."/>
            <person name="Helt G."/>
            <person name="Nelson C.R."/>
            <person name="Miklos G.L.G."/>
            <person name="Abril J.F."/>
            <person name="Agbayani A."/>
            <person name="An H.-J."/>
            <person name="Andrews-Pfannkoch C."/>
            <person name="Baldwin D."/>
            <person name="Ballew R.M."/>
            <person name="Basu A."/>
            <person name="Baxendale J."/>
            <person name="Bayraktaroglu L."/>
            <person name="Beasley E.M."/>
            <person name="Beeson K.Y."/>
            <person name="Benos P.V."/>
            <person name="Berman B.P."/>
            <person name="Bhandari D."/>
            <person name="Bolshakov S."/>
            <person name="Borkova D."/>
            <person name="Botchan M.R."/>
            <person name="Bouck J."/>
            <person name="Brokstein P."/>
            <person name="Brottier P."/>
            <person name="Burtis K.C."/>
            <person name="Busam D.A."/>
            <person name="Butler H."/>
            <person name="Cadieu E."/>
            <person name="Center A."/>
            <person name="Chandra I."/>
            <person name="Cherry J.M."/>
            <person name="Cawley S."/>
            <person name="Dahlke C."/>
            <person name="Davenport L.B."/>
            <person name="Davies P."/>
            <person name="de Pablos B."/>
            <person name="Delcher A."/>
            <person name="Deng Z."/>
            <person name="Mays A.D."/>
            <person name="Dew I."/>
            <person name="Dietz S.M."/>
            <person name="Dodson K."/>
            <person name="Doup L.E."/>
            <person name="Downes M."/>
            <person name="Dugan-Rocha S."/>
            <person name="Dunkov B.C."/>
            <person name="Dunn P."/>
            <person name="Durbin K.J."/>
            <person name="Evangelista C.C."/>
            <person name="Ferraz C."/>
            <person name="Ferriera S."/>
            <person name="Fleischmann W."/>
            <person name="Fosler C."/>
            <person name="Gabrielian A.E."/>
            <person name="Garg N.S."/>
            <person name="Gelbart W.M."/>
            <person name="Glasser K."/>
            <person name="Glodek A."/>
            <person name="Gong F."/>
            <person name="Gorrell J.H."/>
            <person name="Gu Z."/>
            <person name="Guan P."/>
            <person name="Harris M."/>
            <person name="Harris N.L."/>
            <person name="Harvey D.A."/>
            <person name="Heiman T.J."/>
            <person name="Hernandez J.R."/>
            <person name="Houck J."/>
            <person name="Hostin D."/>
            <person name="Houston K.A."/>
            <person name="Howland T.J."/>
            <person name="Wei M.-H."/>
            <person name="Ibegwam C."/>
            <person name="Jalali M."/>
            <person name="Kalush F."/>
            <person name="Karpen G.H."/>
            <person name="Ke Z."/>
            <person name="Kennison J.A."/>
            <person name="Ketchum K.A."/>
            <person name="Kimmel B.E."/>
            <person name="Kodira C.D."/>
            <person name="Kraft C.L."/>
            <person name="Kravitz S."/>
            <person name="Kulp D."/>
            <person name="Lai Z."/>
            <person name="Lasko P."/>
            <person name="Lei Y."/>
            <person name="Levitsky A.A."/>
            <person name="Li J.H."/>
            <person name="Li Z."/>
            <person name="Liang Y."/>
            <person name="Lin X."/>
            <person name="Liu X."/>
            <person name="Mattei B."/>
            <person name="McIntosh T.C."/>
            <person name="McLeod M.P."/>
            <person name="McPherson D."/>
            <person name="Merkulov G."/>
            <person name="Milshina N.V."/>
            <person name="Mobarry C."/>
            <person name="Morris J."/>
            <person name="Moshrefi A."/>
            <person name="Mount S.M."/>
            <person name="Moy M."/>
            <person name="Murphy B."/>
            <person name="Murphy L."/>
            <person name="Muzny D.M."/>
            <person name="Nelson D.L."/>
            <person name="Nelson D.R."/>
            <person name="Nelson K.A."/>
            <person name="Nixon K."/>
            <person name="Nusskern D.R."/>
            <person name="Pacleb J.M."/>
            <person name="Palazzolo M."/>
            <person name="Pittman G.S."/>
            <person name="Pan S."/>
            <person name="Pollard J."/>
            <person name="Puri V."/>
            <person name="Reese M.G."/>
            <person name="Reinert K."/>
            <person name="Remington K."/>
            <person name="Saunders R.D.C."/>
            <person name="Scheeler F."/>
            <person name="Shen H."/>
            <person name="Shue B.C."/>
            <person name="Siden-Kiamos I."/>
            <person name="Simpson M."/>
            <person name="Skupski M.P."/>
            <person name="Smith T.J."/>
            <person name="Spier E."/>
            <person name="Spradling A.C."/>
            <person name="Stapleton M."/>
            <person name="Strong R."/>
            <person name="Sun E."/>
            <person name="Svirskas R."/>
            <person name="Tector C."/>
            <person name="Turner R."/>
            <person name="Venter E."/>
            <person name="Wang A.H."/>
            <person name="Wang X."/>
            <person name="Wang Z.-Y."/>
            <person name="Wassarman D.A."/>
            <person name="Weinstock G.M."/>
            <person name="Weissenbach J."/>
            <person name="Williams S.M."/>
            <person name="Woodage T."/>
            <person name="Worley K.C."/>
            <person name="Wu D."/>
            <person name="Yang S."/>
            <person name="Yao Q.A."/>
            <person name="Ye J."/>
            <person name="Yeh R.-F."/>
            <person name="Zaveri J.S."/>
            <person name="Zhan M."/>
            <person name="Zhang G."/>
            <person name="Zhao Q."/>
            <person name="Zheng L."/>
            <person name="Zheng X.H."/>
            <person name="Zhong F.N."/>
            <person name="Zhong W."/>
            <person name="Zhou X."/>
            <person name="Zhu S.C."/>
            <person name="Zhu X."/>
            <person name="Smith H.O."/>
            <person name="Gibbs R.A."/>
            <person name="Myers E.W."/>
            <person name="Rubin G.M."/>
            <person name="Venter J.C."/>
        </authorList>
    </citation>
    <scope>NUCLEOTIDE SEQUENCE [LARGE SCALE GENOMIC DNA]</scope>
    <source>
        <strain>Berkeley</strain>
    </source>
</reference>
<reference key="2">
    <citation type="journal article" date="2002" name="Genome Biol.">
        <title>Annotation of the Drosophila melanogaster euchromatic genome: a systematic review.</title>
        <authorList>
            <person name="Misra S."/>
            <person name="Crosby M.A."/>
            <person name="Mungall C.J."/>
            <person name="Matthews B.B."/>
            <person name="Campbell K.S."/>
            <person name="Hradecky P."/>
            <person name="Huang Y."/>
            <person name="Kaminker J.S."/>
            <person name="Millburn G.H."/>
            <person name="Prochnik S.E."/>
            <person name="Smith C.D."/>
            <person name="Tupy J.L."/>
            <person name="Whitfield E.J."/>
            <person name="Bayraktaroglu L."/>
            <person name="Berman B.P."/>
            <person name="Bettencourt B.R."/>
            <person name="Celniker S.E."/>
            <person name="de Grey A.D.N.J."/>
            <person name="Drysdale R.A."/>
            <person name="Harris N.L."/>
            <person name="Richter J."/>
            <person name="Russo S."/>
            <person name="Schroeder A.J."/>
            <person name="Shu S.Q."/>
            <person name="Stapleton M."/>
            <person name="Yamada C."/>
            <person name="Ashburner M."/>
            <person name="Gelbart W.M."/>
            <person name="Rubin G.M."/>
            <person name="Lewis S.E."/>
        </authorList>
    </citation>
    <scope>GENOME REANNOTATION</scope>
    <source>
        <strain>Berkeley</strain>
    </source>
</reference>
<reference key="3">
    <citation type="journal article" date="2002" name="Genome Biol.">
        <title>A Drosophila full-length cDNA resource.</title>
        <authorList>
            <person name="Stapleton M."/>
            <person name="Carlson J.W."/>
            <person name="Brokstein P."/>
            <person name="Yu C."/>
            <person name="Champe M."/>
            <person name="George R.A."/>
            <person name="Guarin H."/>
            <person name="Kronmiller B."/>
            <person name="Pacleb J.M."/>
            <person name="Park S."/>
            <person name="Wan K.H."/>
            <person name="Rubin G.M."/>
            <person name="Celniker S.E."/>
        </authorList>
    </citation>
    <scope>NUCLEOTIDE SEQUENCE [LARGE SCALE MRNA]</scope>
    <source>
        <strain>Berkeley</strain>
        <tissue>Embryo</tissue>
    </source>
</reference>
<reference key="4">
    <citation type="journal article" date="2017" name="Sci. Rep.">
        <title>Systematic discovery of genetic modulation by Jumonji histone demethylases in Drosophila.</title>
        <authorList>
            <person name="Shalaby N.A."/>
            <person name="Sayed R."/>
            <person name="Zhang Q."/>
            <person name="Scoggin S."/>
            <person name="Eliazer S."/>
            <person name="Rothenfluh A."/>
            <person name="Buszczak M."/>
        </authorList>
    </citation>
    <scope>FUNCTION</scope>
    <scope>SUBCELLULAR LOCATION</scope>
    <scope>DISRUPTION PHENOTYPE</scope>
</reference>
<reference key="5">
    <citation type="journal article" date="2018" name="Sci. Rep.">
        <title>JmjC domain proteins modulate circadian behaviors and sleep in Drosophila.</title>
        <authorList>
            <person name="Shalaby N.A."/>
            <person name="Pinzon J.H."/>
            <person name="Narayanan A.S."/>
            <person name="Jin E.J."/>
            <person name="Ritz M.P."/>
            <person name="Dove R.J."/>
            <person name="Wolfenberg H."/>
            <person name="Rodan A.R."/>
            <person name="Buszczak M."/>
            <person name="Rothenfluh A."/>
        </authorList>
    </citation>
    <scope>DISRUPTION PHENOTYPE</scope>
</reference>
<accession>Q9VJ97</accession>